<comment type="function">
    <text evidence="1">ATP-dependent specificity component of the Clp protease. It directs the protease to specific substrates. Can perform chaperone functions in the absence of ClpP.</text>
</comment>
<comment type="subunit">
    <text evidence="1">Component of the ClpX-ClpP complex. Forms a hexameric ring that, in the presence of ATP, binds to fourteen ClpP subunits assembled into a disk-like structure with a central cavity, resembling the structure of eukaryotic proteasomes.</text>
</comment>
<comment type="similarity">
    <text evidence="1">Belongs to the ClpX chaperone family.</text>
</comment>
<dbReference type="EMBL" id="CP001150">
    <property type="protein sequence ID" value="ACM01395.1"/>
    <property type="molecule type" value="Genomic_DNA"/>
</dbReference>
<dbReference type="RefSeq" id="WP_002720341.1">
    <property type="nucleotide sequence ID" value="NC_011963.1"/>
</dbReference>
<dbReference type="SMR" id="B9KJU8"/>
<dbReference type="GeneID" id="67446945"/>
<dbReference type="KEGG" id="rsk:RSKD131_1535"/>
<dbReference type="HOGENOM" id="CLU_014218_8_2_5"/>
<dbReference type="GO" id="GO:0009376">
    <property type="term" value="C:HslUV protease complex"/>
    <property type="evidence" value="ECO:0007669"/>
    <property type="project" value="TreeGrafter"/>
</dbReference>
<dbReference type="GO" id="GO:0005524">
    <property type="term" value="F:ATP binding"/>
    <property type="evidence" value="ECO:0007669"/>
    <property type="project" value="UniProtKB-UniRule"/>
</dbReference>
<dbReference type="GO" id="GO:0016887">
    <property type="term" value="F:ATP hydrolysis activity"/>
    <property type="evidence" value="ECO:0007669"/>
    <property type="project" value="InterPro"/>
</dbReference>
<dbReference type="GO" id="GO:0140662">
    <property type="term" value="F:ATP-dependent protein folding chaperone"/>
    <property type="evidence" value="ECO:0007669"/>
    <property type="project" value="InterPro"/>
</dbReference>
<dbReference type="GO" id="GO:0046983">
    <property type="term" value="F:protein dimerization activity"/>
    <property type="evidence" value="ECO:0007669"/>
    <property type="project" value="InterPro"/>
</dbReference>
<dbReference type="GO" id="GO:0051082">
    <property type="term" value="F:unfolded protein binding"/>
    <property type="evidence" value="ECO:0007669"/>
    <property type="project" value="UniProtKB-UniRule"/>
</dbReference>
<dbReference type="GO" id="GO:0008270">
    <property type="term" value="F:zinc ion binding"/>
    <property type="evidence" value="ECO:0007669"/>
    <property type="project" value="InterPro"/>
</dbReference>
<dbReference type="GO" id="GO:0051301">
    <property type="term" value="P:cell division"/>
    <property type="evidence" value="ECO:0007669"/>
    <property type="project" value="TreeGrafter"/>
</dbReference>
<dbReference type="GO" id="GO:0051603">
    <property type="term" value="P:proteolysis involved in protein catabolic process"/>
    <property type="evidence" value="ECO:0007669"/>
    <property type="project" value="TreeGrafter"/>
</dbReference>
<dbReference type="CDD" id="cd19497">
    <property type="entry name" value="RecA-like_ClpX"/>
    <property type="match status" value="1"/>
</dbReference>
<dbReference type="FunFam" id="1.10.8.60:FF:000002">
    <property type="entry name" value="ATP-dependent Clp protease ATP-binding subunit ClpX"/>
    <property type="match status" value="1"/>
</dbReference>
<dbReference type="FunFam" id="3.40.50.300:FF:000005">
    <property type="entry name" value="ATP-dependent Clp protease ATP-binding subunit ClpX"/>
    <property type="match status" value="1"/>
</dbReference>
<dbReference type="Gene3D" id="1.10.8.60">
    <property type="match status" value="1"/>
</dbReference>
<dbReference type="Gene3D" id="6.20.220.10">
    <property type="entry name" value="ClpX chaperone, C4-type zinc finger domain"/>
    <property type="match status" value="1"/>
</dbReference>
<dbReference type="Gene3D" id="3.40.50.300">
    <property type="entry name" value="P-loop containing nucleotide triphosphate hydrolases"/>
    <property type="match status" value="1"/>
</dbReference>
<dbReference type="HAMAP" id="MF_00175">
    <property type="entry name" value="ClpX"/>
    <property type="match status" value="1"/>
</dbReference>
<dbReference type="InterPro" id="IPR003593">
    <property type="entry name" value="AAA+_ATPase"/>
</dbReference>
<dbReference type="InterPro" id="IPR050052">
    <property type="entry name" value="ATP-dep_Clp_protease_ClpX"/>
</dbReference>
<dbReference type="InterPro" id="IPR003959">
    <property type="entry name" value="ATPase_AAA_core"/>
</dbReference>
<dbReference type="InterPro" id="IPR019489">
    <property type="entry name" value="Clp_ATPase_C"/>
</dbReference>
<dbReference type="InterPro" id="IPR004487">
    <property type="entry name" value="Clp_protease_ATP-bd_su_ClpX"/>
</dbReference>
<dbReference type="InterPro" id="IPR046425">
    <property type="entry name" value="ClpX_bact"/>
</dbReference>
<dbReference type="InterPro" id="IPR027417">
    <property type="entry name" value="P-loop_NTPase"/>
</dbReference>
<dbReference type="InterPro" id="IPR010603">
    <property type="entry name" value="Znf_CppX_C4"/>
</dbReference>
<dbReference type="InterPro" id="IPR038366">
    <property type="entry name" value="Znf_CppX_C4_sf"/>
</dbReference>
<dbReference type="NCBIfam" id="TIGR00382">
    <property type="entry name" value="clpX"/>
    <property type="match status" value="1"/>
</dbReference>
<dbReference type="NCBIfam" id="NF003745">
    <property type="entry name" value="PRK05342.1"/>
    <property type="match status" value="1"/>
</dbReference>
<dbReference type="PANTHER" id="PTHR48102:SF7">
    <property type="entry name" value="ATP-DEPENDENT CLP PROTEASE ATP-BINDING SUBUNIT CLPX-LIKE, MITOCHONDRIAL"/>
    <property type="match status" value="1"/>
</dbReference>
<dbReference type="PANTHER" id="PTHR48102">
    <property type="entry name" value="ATP-DEPENDENT CLP PROTEASE ATP-BINDING SUBUNIT CLPX-LIKE, MITOCHONDRIAL-RELATED"/>
    <property type="match status" value="1"/>
</dbReference>
<dbReference type="Pfam" id="PF07724">
    <property type="entry name" value="AAA_2"/>
    <property type="match status" value="1"/>
</dbReference>
<dbReference type="Pfam" id="PF10431">
    <property type="entry name" value="ClpB_D2-small"/>
    <property type="match status" value="1"/>
</dbReference>
<dbReference type="Pfam" id="PF06689">
    <property type="entry name" value="zf-C4_ClpX"/>
    <property type="match status" value="1"/>
</dbReference>
<dbReference type="SMART" id="SM00382">
    <property type="entry name" value="AAA"/>
    <property type="match status" value="1"/>
</dbReference>
<dbReference type="SMART" id="SM01086">
    <property type="entry name" value="ClpB_D2-small"/>
    <property type="match status" value="1"/>
</dbReference>
<dbReference type="SMART" id="SM00994">
    <property type="entry name" value="zf-C4_ClpX"/>
    <property type="match status" value="1"/>
</dbReference>
<dbReference type="SUPFAM" id="SSF57716">
    <property type="entry name" value="Glucocorticoid receptor-like (DNA-binding domain)"/>
    <property type="match status" value="1"/>
</dbReference>
<dbReference type="SUPFAM" id="SSF52540">
    <property type="entry name" value="P-loop containing nucleoside triphosphate hydrolases"/>
    <property type="match status" value="1"/>
</dbReference>
<dbReference type="PROSITE" id="PS51902">
    <property type="entry name" value="CLPX_ZB"/>
    <property type="match status" value="1"/>
</dbReference>
<accession>B9KJU8</accession>
<organism>
    <name type="scientific">Cereibacter sphaeroides (strain KD131 / KCTC 12085)</name>
    <name type="common">Rhodobacter sphaeroides</name>
    <dbReference type="NCBI Taxonomy" id="557760"/>
    <lineage>
        <taxon>Bacteria</taxon>
        <taxon>Pseudomonadati</taxon>
        <taxon>Pseudomonadota</taxon>
        <taxon>Alphaproteobacteria</taxon>
        <taxon>Rhodobacterales</taxon>
        <taxon>Paracoccaceae</taxon>
        <taxon>Cereibacter</taxon>
    </lineage>
</organism>
<keyword id="KW-0067">ATP-binding</keyword>
<keyword id="KW-0143">Chaperone</keyword>
<keyword id="KW-0479">Metal-binding</keyword>
<keyword id="KW-0547">Nucleotide-binding</keyword>
<keyword id="KW-0862">Zinc</keyword>
<evidence type="ECO:0000255" key="1">
    <source>
        <dbReference type="HAMAP-Rule" id="MF_00175"/>
    </source>
</evidence>
<evidence type="ECO:0000255" key="2">
    <source>
        <dbReference type="PROSITE-ProRule" id="PRU01250"/>
    </source>
</evidence>
<protein>
    <recommendedName>
        <fullName evidence="1">ATP-dependent Clp protease ATP-binding subunit ClpX</fullName>
    </recommendedName>
</protein>
<reference key="1">
    <citation type="journal article" date="2009" name="J. Bacteriol.">
        <title>Complete genome sequence of Rhodobacter sphaeroides KD131.</title>
        <authorList>
            <person name="Lim S.-K."/>
            <person name="Kim S.J."/>
            <person name="Cha S.H."/>
            <person name="Oh Y.-K."/>
            <person name="Rhee H.-J."/>
            <person name="Kim M.-S."/>
            <person name="Lee J.K."/>
        </authorList>
    </citation>
    <scope>NUCLEOTIDE SEQUENCE [LARGE SCALE GENOMIC DNA]</scope>
    <source>
        <strain>KD131 / KCTC 12085</strain>
    </source>
</reference>
<gene>
    <name evidence="1" type="primary">clpX</name>
    <name type="ordered locus">RSKD131_1535</name>
</gene>
<proteinExistence type="inferred from homology"/>
<sequence length="421" mass="45833">MANNTGSDSKNTLYCSFCGKSQHEVRKLIAGPTVFICDECVELCMDIIREETKSTGLKSADGVPTPREICKVLDDYVIGQMHAKRVLSVAVHNHYKRLNHSSKTDIELSKSNILLIGPTGCGKTLLAQTLARILDVPFTMADATTLTEAGYVGEDVENIILKLLQASEYNVERAQRGIVYIDEVDKITRKSDNPSITRDVSGEGVQQALLKIMEGTVASVPPQGGRKHPQQEFLQVDTTNILFICGGAFAGLEKIIAQRGKGSGIGFGAEVKDPDARGVGELFKELEPEDLLKFGLIPEFVGRLPVIATLTDLDEAALVTILTEPKNALVKQYQRLFEIEGVKLTFTADALTAIAKRAIKRKTGARGLRSIMEDILLDTMFELPGLEGVEEVVVNEEAVNSGAKPLLIYTEVTKKKDATAS</sequence>
<feature type="chain" id="PRO_1000123847" description="ATP-dependent Clp protease ATP-binding subunit ClpX">
    <location>
        <begin position="1"/>
        <end position="421"/>
    </location>
</feature>
<feature type="domain" description="ClpX-type ZB" evidence="2">
    <location>
        <begin position="3"/>
        <end position="56"/>
    </location>
</feature>
<feature type="binding site" evidence="2">
    <location>
        <position position="15"/>
    </location>
    <ligand>
        <name>Zn(2+)</name>
        <dbReference type="ChEBI" id="CHEBI:29105"/>
    </ligand>
</feature>
<feature type="binding site" evidence="2">
    <location>
        <position position="18"/>
    </location>
    <ligand>
        <name>Zn(2+)</name>
        <dbReference type="ChEBI" id="CHEBI:29105"/>
    </ligand>
</feature>
<feature type="binding site" evidence="2">
    <location>
        <position position="37"/>
    </location>
    <ligand>
        <name>Zn(2+)</name>
        <dbReference type="ChEBI" id="CHEBI:29105"/>
    </ligand>
</feature>
<feature type="binding site" evidence="2">
    <location>
        <position position="40"/>
    </location>
    <ligand>
        <name>Zn(2+)</name>
        <dbReference type="ChEBI" id="CHEBI:29105"/>
    </ligand>
</feature>
<feature type="binding site" evidence="1">
    <location>
        <begin position="118"/>
        <end position="125"/>
    </location>
    <ligand>
        <name>ATP</name>
        <dbReference type="ChEBI" id="CHEBI:30616"/>
    </ligand>
</feature>
<name>CLPX_CERSK</name>